<comment type="function">
    <text evidence="1">Catalyzes the oxidative deamination and cyclization of 2-amino-3,7-dideoxy-D-threo-hept-6-ulosonic acid (ADH) to yield 3-dehydroquinate (DHQ), which is fed into the canonical shikimic pathway of aromatic amino acid biosynthesis.</text>
</comment>
<comment type="catalytic activity">
    <reaction evidence="1">
        <text>2-amino-2,3,7-trideoxy-D-lyxo-hept-6-ulosonate + NAD(+) + H2O = 3-dehydroquinate + NH4(+) + NADH + H(+)</text>
        <dbReference type="Rhea" id="RHEA:25956"/>
        <dbReference type="ChEBI" id="CHEBI:15377"/>
        <dbReference type="ChEBI" id="CHEBI:15378"/>
        <dbReference type="ChEBI" id="CHEBI:28938"/>
        <dbReference type="ChEBI" id="CHEBI:32364"/>
        <dbReference type="ChEBI" id="CHEBI:57540"/>
        <dbReference type="ChEBI" id="CHEBI:57945"/>
        <dbReference type="ChEBI" id="CHEBI:58859"/>
        <dbReference type="EC" id="1.4.1.24"/>
    </reaction>
</comment>
<comment type="similarity">
    <text evidence="1">Belongs to the archaeal-type DHQ synthase family.</text>
</comment>
<sequence>MPRAQLQRFLSGISAEGIRTVYLDPKDAAKAKLDAMHSSPSSRYVVLEGRAAKPRGKKVGRRFKILSNKDIDGVLQEAQKGLDFVITEVQDWKIIPLENMIAKLHKIHTRLYAVARSPAEVRKMFSILDVGVDGVIFTASTVGDVREALVHLGTKSFRLQPARITEIREVGDGERVCVDTASMLERGEGMLVGSRSNFMFLVHNESVGSSFTSPRPFRVNAGAVHSYTLGTDGNTLYLSEVETGTEVLVLDSHGRARRAAVGRSKIERRPMLMIKAEADGEIGGIIAQDAETIRFVRPGGGLVSVTHLKKGDKVLVHSKPAAGRHFGMEVADEYILEK</sequence>
<name>DHQS_CENSY</name>
<evidence type="ECO:0000255" key="1">
    <source>
        <dbReference type="HAMAP-Rule" id="MF_01244"/>
    </source>
</evidence>
<accession>A0RU27</accession>
<keyword id="KW-0028">Amino-acid biosynthesis</keyword>
<keyword id="KW-0057">Aromatic amino acid biosynthesis</keyword>
<keyword id="KW-0520">NAD</keyword>
<keyword id="KW-0560">Oxidoreductase</keyword>
<keyword id="KW-1185">Reference proteome</keyword>
<feature type="chain" id="PRO_0000372043" description="3-dehydroquinate synthase">
    <location>
        <begin position="1"/>
        <end position="338"/>
    </location>
</feature>
<protein>
    <recommendedName>
        <fullName evidence="1">3-dehydroquinate synthase</fullName>
        <shortName evidence="1">DHQ synthase</shortName>
        <ecNumber evidence="1">1.4.1.24</ecNumber>
    </recommendedName>
    <alternativeName>
        <fullName evidence="1">3-dehydroquinate synthase II</fullName>
    </alternativeName>
</protein>
<dbReference type="EC" id="1.4.1.24" evidence="1"/>
<dbReference type="EMBL" id="DP000238">
    <property type="protein sequence ID" value="ABK76844.1"/>
    <property type="molecule type" value="Genomic_DNA"/>
</dbReference>
<dbReference type="STRING" id="414004.CENSYa_0201"/>
<dbReference type="EnsemblBacteria" id="ABK76844">
    <property type="protein sequence ID" value="ABK76844"/>
    <property type="gene ID" value="CENSYa_0201"/>
</dbReference>
<dbReference type="KEGG" id="csy:CENSYa_0201"/>
<dbReference type="PATRIC" id="fig|414004.10.peg.176"/>
<dbReference type="HOGENOM" id="CLU_056379_0_0_2"/>
<dbReference type="Proteomes" id="UP000000758">
    <property type="component" value="Chromosome"/>
</dbReference>
<dbReference type="GO" id="GO:0003856">
    <property type="term" value="F:3-dehydroquinate synthase activity"/>
    <property type="evidence" value="ECO:0007669"/>
    <property type="project" value="InterPro"/>
</dbReference>
<dbReference type="GO" id="GO:0102042">
    <property type="term" value="F:dehydroquinate synthase activity"/>
    <property type="evidence" value="ECO:0007669"/>
    <property type="project" value="UniProtKB-EC"/>
</dbReference>
<dbReference type="GO" id="GO:0051287">
    <property type="term" value="F:NAD binding"/>
    <property type="evidence" value="ECO:0007669"/>
    <property type="project" value="UniProtKB-UniRule"/>
</dbReference>
<dbReference type="GO" id="GO:0008652">
    <property type="term" value="P:amino acid biosynthetic process"/>
    <property type="evidence" value="ECO:0007669"/>
    <property type="project" value="UniProtKB-KW"/>
</dbReference>
<dbReference type="GO" id="GO:0009073">
    <property type="term" value="P:aromatic amino acid family biosynthetic process"/>
    <property type="evidence" value="ECO:0007669"/>
    <property type="project" value="UniProtKB-UniRule"/>
</dbReference>
<dbReference type="HAMAP" id="MF_01244">
    <property type="entry name" value="Arch_DHQ_synthase"/>
    <property type="match status" value="1"/>
</dbReference>
<dbReference type="InterPro" id="IPR002812">
    <property type="entry name" value="DHQ_synth"/>
</dbReference>
<dbReference type="PANTHER" id="PTHR33563">
    <property type="match status" value="1"/>
</dbReference>
<dbReference type="PANTHER" id="PTHR33563:SF1">
    <property type="entry name" value="3-DEHYDROQUINATE SYNTHASE"/>
    <property type="match status" value="1"/>
</dbReference>
<dbReference type="Pfam" id="PF01959">
    <property type="entry name" value="DHQS"/>
    <property type="match status" value="1"/>
</dbReference>
<reference key="1">
    <citation type="journal article" date="2006" name="Proc. Natl. Acad. Sci. U.S.A.">
        <title>Genomic analysis of the uncultivated marine crenarchaeote Cenarchaeum symbiosum.</title>
        <authorList>
            <person name="Hallam S.J."/>
            <person name="Konstantinidis K.T."/>
            <person name="Putnam N."/>
            <person name="Schleper C."/>
            <person name="Watanabe Y."/>
            <person name="Sugahara J."/>
            <person name="Preston C."/>
            <person name="de la Torre J."/>
            <person name="Richardson P.M."/>
            <person name="DeLong E.F."/>
        </authorList>
    </citation>
    <scope>NUCLEOTIDE SEQUENCE [LARGE SCALE GENOMIC DNA]</scope>
    <source>
        <strain>A</strain>
    </source>
</reference>
<proteinExistence type="inferred from homology"/>
<organism>
    <name type="scientific">Cenarchaeum symbiosum (strain A)</name>
    <dbReference type="NCBI Taxonomy" id="414004"/>
    <lineage>
        <taxon>Archaea</taxon>
        <taxon>Nitrososphaerota</taxon>
        <taxon>Candidatus Cenarchaeales</taxon>
        <taxon>Candidatus Cenarchaeaceae</taxon>
        <taxon>Candidatus Cenarchaeum</taxon>
    </lineage>
</organism>
<gene>
    <name evidence="1" type="primary">aroB'</name>
    <name type="ordered locus">CENSYa_0201</name>
</gene>